<gene>
    <name evidence="1" type="primary">argH</name>
</gene>
<protein>
    <recommendedName>
        <fullName evidence="1">Argininosuccinate lyase</fullName>
        <shortName evidence="1">ASAL</shortName>
        <ecNumber evidence="1">4.3.2.1</ecNumber>
    </recommendedName>
    <alternativeName>
        <fullName evidence="1">Arginosuccinase</fullName>
    </alternativeName>
</protein>
<sequence length="452" mass="48814">MWSGRFSSPVCAPVQSFTASVGFDRAMCHCDAAVLAAHCRSLYLRRVMSIADLADVERGLSEVAMGARAGAISWRPELEDVHRNVEHVLTELVGKAGRMAHTGKSRNDQVSTTARVWLRHMAGAAICRVEELERALAARSRACLNTMMPGLTHMQVAQPVTAAHYLTAYRCMLSRDRSRLVRCTRGACVLTLGSGALAGTNHGGDRYTTADMLGLHCVSPNSLDAVSDRDFVMEYALCCAVLMVHMSRLAEDMIAWSSSIVGFAVLGDALCTGSSIMPQKKNPDILELVRAKAAVLIGGAMGIMAVMKAQGLAYNRDNQEDKAVLLGASRAVTRSLSVMALAVRSLRLNKSRLRRRLESSFAIATDLADSLVWHGMTFRDSHEAVARAVGVAIRAGHAGLRALPLCSRGVVPPLLAARLARIAQPDARVSAFRKDSTGSTSPKWSFRAMRRA</sequence>
<feature type="chain" id="PRO_0000137755" description="Argininosuccinate lyase">
    <location>
        <begin position="1"/>
        <end position="452"/>
    </location>
</feature>
<feature type="region of interest" description="Disordered" evidence="2">
    <location>
        <begin position="431"/>
        <end position="452"/>
    </location>
</feature>
<keyword id="KW-0028">Amino-acid biosynthesis</keyword>
<keyword id="KW-0055">Arginine biosynthesis</keyword>
<keyword id="KW-0963">Cytoplasm</keyword>
<keyword id="KW-0456">Lyase</keyword>
<dbReference type="EC" id="4.3.2.1" evidence="1"/>
<dbReference type="EMBL" id="AF481102">
    <property type="protein sequence ID" value="AAM75989.1"/>
    <property type="molecule type" value="Genomic_DNA"/>
</dbReference>
<dbReference type="SMR" id="Q8KTQ9"/>
<dbReference type="UniPathway" id="UPA00068">
    <property type="reaction ID" value="UER00114"/>
</dbReference>
<dbReference type="GO" id="GO:0005829">
    <property type="term" value="C:cytosol"/>
    <property type="evidence" value="ECO:0007669"/>
    <property type="project" value="TreeGrafter"/>
</dbReference>
<dbReference type="GO" id="GO:0004056">
    <property type="term" value="F:argininosuccinate lyase activity"/>
    <property type="evidence" value="ECO:0007669"/>
    <property type="project" value="UniProtKB-UniRule"/>
</dbReference>
<dbReference type="GO" id="GO:0042450">
    <property type="term" value="P:arginine biosynthetic process via ornithine"/>
    <property type="evidence" value="ECO:0007669"/>
    <property type="project" value="InterPro"/>
</dbReference>
<dbReference type="GO" id="GO:0006526">
    <property type="term" value="P:L-arginine biosynthetic process"/>
    <property type="evidence" value="ECO:0007669"/>
    <property type="project" value="UniProtKB-UniRule"/>
</dbReference>
<dbReference type="CDD" id="cd01359">
    <property type="entry name" value="Argininosuccinate_lyase"/>
    <property type="match status" value="1"/>
</dbReference>
<dbReference type="FunFam" id="1.20.200.10:FF:000015">
    <property type="entry name" value="argininosuccinate lyase isoform X2"/>
    <property type="match status" value="1"/>
</dbReference>
<dbReference type="Gene3D" id="1.10.40.30">
    <property type="entry name" value="Fumarase/aspartase (C-terminal domain)"/>
    <property type="match status" value="1"/>
</dbReference>
<dbReference type="Gene3D" id="1.20.200.10">
    <property type="entry name" value="Fumarase/aspartase (Central domain)"/>
    <property type="match status" value="1"/>
</dbReference>
<dbReference type="Gene3D" id="1.10.275.10">
    <property type="entry name" value="Fumarase/aspartase (N-terminal domain)"/>
    <property type="match status" value="1"/>
</dbReference>
<dbReference type="HAMAP" id="MF_00006">
    <property type="entry name" value="Arg_succ_lyase"/>
    <property type="match status" value="1"/>
</dbReference>
<dbReference type="InterPro" id="IPR029419">
    <property type="entry name" value="Arg_succ_lyase_C"/>
</dbReference>
<dbReference type="InterPro" id="IPR009049">
    <property type="entry name" value="Argininosuccinate_lyase"/>
</dbReference>
<dbReference type="InterPro" id="IPR024083">
    <property type="entry name" value="Fumarase/histidase_N"/>
</dbReference>
<dbReference type="InterPro" id="IPR020557">
    <property type="entry name" value="Fumarate_lyase_CS"/>
</dbReference>
<dbReference type="InterPro" id="IPR000362">
    <property type="entry name" value="Fumarate_lyase_fam"/>
</dbReference>
<dbReference type="InterPro" id="IPR022761">
    <property type="entry name" value="Fumarate_lyase_N"/>
</dbReference>
<dbReference type="InterPro" id="IPR008948">
    <property type="entry name" value="L-Aspartase-like"/>
</dbReference>
<dbReference type="NCBIfam" id="TIGR00838">
    <property type="entry name" value="argH"/>
    <property type="match status" value="1"/>
</dbReference>
<dbReference type="PANTHER" id="PTHR43814">
    <property type="entry name" value="ARGININOSUCCINATE LYASE"/>
    <property type="match status" value="1"/>
</dbReference>
<dbReference type="PANTHER" id="PTHR43814:SF1">
    <property type="entry name" value="ARGININOSUCCINATE LYASE"/>
    <property type="match status" value="1"/>
</dbReference>
<dbReference type="Pfam" id="PF14698">
    <property type="entry name" value="ASL_C2"/>
    <property type="match status" value="1"/>
</dbReference>
<dbReference type="Pfam" id="PF00206">
    <property type="entry name" value="Lyase_1"/>
    <property type="match status" value="1"/>
</dbReference>
<dbReference type="PRINTS" id="PR00145">
    <property type="entry name" value="ARGSUCLYASE"/>
</dbReference>
<dbReference type="PRINTS" id="PR00149">
    <property type="entry name" value="FUMRATELYASE"/>
</dbReference>
<dbReference type="SUPFAM" id="SSF48557">
    <property type="entry name" value="L-aspartase-like"/>
    <property type="match status" value="1"/>
</dbReference>
<dbReference type="PROSITE" id="PS00163">
    <property type="entry name" value="FUMARATE_LYASES"/>
    <property type="match status" value="1"/>
</dbReference>
<organism>
    <name type="scientific">Tremblaya princeps</name>
    <dbReference type="NCBI Taxonomy" id="189385"/>
    <lineage>
        <taxon>Bacteria</taxon>
        <taxon>Pseudomonadati</taxon>
        <taxon>Pseudomonadota</taxon>
        <taxon>Betaproteobacteria</taxon>
        <taxon>Candidatus Tremblaya</taxon>
    </lineage>
</organism>
<accession>Q8KTQ9</accession>
<name>ARLY_TREPR</name>
<proteinExistence type="inferred from homology"/>
<evidence type="ECO:0000255" key="1">
    <source>
        <dbReference type="HAMAP-Rule" id="MF_00006"/>
    </source>
</evidence>
<evidence type="ECO:0000256" key="2">
    <source>
        <dbReference type="SAM" id="MobiDB-lite"/>
    </source>
</evidence>
<comment type="catalytic activity">
    <reaction evidence="1">
        <text>2-(N(omega)-L-arginino)succinate = fumarate + L-arginine</text>
        <dbReference type="Rhea" id="RHEA:24020"/>
        <dbReference type="ChEBI" id="CHEBI:29806"/>
        <dbReference type="ChEBI" id="CHEBI:32682"/>
        <dbReference type="ChEBI" id="CHEBI:57472"/>
        <dbReference type="EC" id="4.3.2.1"/>
    </reaction>
</comment>
<comment type="pathway">
    <text evidence="1">Amino-acid biosynthesis; L-arginine biosynthesis; L-arginine from L-ornithine and carbamoyl phosphate: step 3/3.</text>
</comment>
<comment type="subcellular location">
    <subcellularLocation>
        <location evidence="1">Cytoplasm</location>
    </subcellularLocation>
</comment>
<comment type="similarity">
    <text evidence="1">Belongs to the lyase 1 family. Argininosuccinate lyase subfamily.</text>
</comment>
<reference key="1">
    <citation type="journal article" date="2002" name="Appl. Environ. Microbiol.">
        <title>The genetic properties of the primary endosymbionts of mealybugs differ from those of other endosymbionts of plant sap-sucking insects.</title>
        <authorList>
            <person name="Baumann L."/>
            <person name="Thao M.L."/>
            <person name="Hess J.M."/>
            <person name="Johnson M.W."/>
            <person name="Baumann P."/>
        </authorList>
    </citation>
    <scope>NUCLEOTIDE SEQUENCE [GENOMIC DNA]</scope>
</reference>